<organism>
    <name type="scientific">Escherichia coli O45:K1 (strain S88 / ExPEC)</name>
    <dbReference type="NCBI Taxonomy" id="585035"/>
    <lineage>
        <taxon>Bacteria</taxon>
        <taxon>Pseudomonadati</taxon>
        <taxon>Pseudomonadota</taxon>
        <taxon>Gammaproteobacteria</taxon>
        <taxon>Enterobacterales</taxon>
        <taxon>Enterobacteriaceae</taxon>
        <taxon>Escherichia</taxon>
    </lineage>
</organism>
<name>KEFG_ECO45</name>
<comment type="function">
    <text evidence="1">Regulatory subunit of a potassium efflux system that confers protection against electrophiles. Required for full activity of KefB.</text>
</comment>
<comment type="catalytic activity">
    <reaction evidence="1">
        <text>a quinone + NADH + H(+) = a quinol + NAD(+)</text>
        <dbReference type="Rhea" id="RHEA:46160"/>
        <dbReference type="ChEBI" id="CHEBI:15378"/>
        <dbReference type="ChEBI" id="CHEBI:24646"/>
        <dbReference type="ChEBI" id="CHEBI:57540"/>
        <dbReference type="ChEBI" id="CHEBI:57945"/>
        <dbReference type="ChEBI" id="CHEBI:132124"/>
        <dbReference type="EC" id="1.6.5.2"/>
    </reaction>
</comment>
<comment type="catalytic activity">
    <reaction evidence="1">
        <text>a quinone + NADPH + H(+) = a quinol + NADP(+)</text>
        <dbReference type="Rhea" id="RHEA:46164"/>
        <dbReference type="ChEBI" id="CHEBI:15378"/>
        <dbReference type="ChEBI" id="CHEBI:24646"/>
        <dbReference type="ChEBI" id="CHEBI:57783"/>
        <dbReference type="ChEBI" id="CHEBI:58349"/>
        <dbReference type="ChEBI" id="CHEBI:132124"/>
        <dbReference type="EC" id="1.6.5.2"/>
    </reaction>
</comment>
<comment type="subunit">
    <text evidence="1">Interacts with KefB.</text>
</comment>
<comment type="subcellular location">
    <subcellularLocation>
        <location evidence="1">Cell inner membrane</location>
        <topology evidence="1">Peripheral membrane protein</topology>
        <orientation evidence="1">Cytoplasmic side</orientation>
    </subcellularLocation>
</comment>
<comment type="similarity">
    <text evidence="1">Belongs to the NAD(P)H dehydrogenase (quinone) family. KefG subfamily.</text>
</comment>
<keyword id="KW-0997">Cell inner membrane</keyword>
<keyword id="KW-1003">Cell membrane</keyword>
<keyword id="KW-0472">Membrane</keyword>
<keyword id="KW-0520">NAD</keyword>
<keyword id="KW-0560">Oxidoreductase</keyword>
<keyword id="KW-1185">Reference proteome</keyword>
<dbReference type="EC" id="1.6.5.2" evidence="1"/>
<dbReference type="EMBL" id="CU928161">
    <property type="protein sequence ID" value="CAR04956.1"/>
    <property type="molecule type" value="Genomic_DNA"/>
</dbReference>
<dbReference type="SMR" id="B7MCW7"/>
<dbReference type="KEGG" id="ecz:ECS88_3740"/>
<dbReference type="HOGENOM" id="CLU_058643_0_1_6"/>
<dbReference type="Proteomes" id="UP000000747">
    <property type="component" value="Chromosome"/>
</dbReference>
<dbReference type="GO" id="GO:0005886">
    <property type="term" value="C:plasma membrane"/>
    <property type="evidence" value="ECO:0007669"/>
    <property type="project" value="UniProtKB-SubCell"/>
</dbReference>
<dbReference type="GO" id="GO:0009055">
    <property type="term" value="F:electron transfer activity"/>
    <property type="evidence" value="ECO:0007669"/>
    <property type="project" value="TreeGrafter"/>
</dbReference>
<dbReference type="GO" id="GO:0010181">
    <property type="term" value="F:FMN binding"/>
    <property type="evidence" value="ECO:0007669"/>
    <property type="project" value="TreeGrafter"/>
</dbReference>
<dbReference type="GO" id="GO:0050136">
    <property type="term" value="F:NADH:ubiquinone reductase (non-electrogenic) activity"/>
    <property type="evidence" value="ECO:0007669"/>
    <property type="project" value="RHEA"/>
</dbReference>
<dbReference type="GO" id="GO:0008753">
    <property type="term" value="F:NADPH dehydrogenase (quinone) activity"/>
    <property type="evidence" value="ECO:0007669"/>
    <property type="project" value="RHEA"/>
</dbReference>
<dbReference type="GO" id="GO:1901381">
    <property type="term" value="P:positive regulation of potassium ion transmembrane transport"/>
    <property type="evidence" value="ECO:0007669"/>
    <property type="project" value="UniProtKB-UniRule"/>
</dbReference>
<dbReference type="GO" id="GO:0006813">
    <property type="term" value="P:potassium ion transport"/>
    <property type="evidence" value="ECO:0007669"/>
    <property type="project" value="InterPro"/>
</dbReference>
<dbReference type="FunFam" id="3.40.50.360:FF:000013">
    <property type="entry name" value="Glutathione-regulated potassium-efflux system ancillary protein KefG"/>
    <property type="match status" value="1"/>
</dbReference>
<dbReference type="Gene3D" id="3.40.50.360">
    <property type="match status" value="1"/>
</dbReference>
<dbReference type="HAMAP" id="MF_01415">
    <property type="entry name" value="K_H_efflux_KefG"/>
    <property type="match status" value="1"/>
</dbReference>
<dbReference type="InterPro" id="IPR003680">
    <property type="entry name" value="Flavodoxin_fold"/>
</dbReference>
<dbReference type="InterPro" id="IPR029039">
    <property type="entry name" value="Flavoprotein-like_sf"/>
</dbReference>
<dbReference type="InterPro" id="IPR023947">
    <property type="entry name" value="K_H_efflux_KefG"/>
</dbReference>
<dbReference type="InterPro" id="IPR046980">
    <property type="entry name" value="KefG/KefF"/>
</dbReference>
<dbReference type="NCBIfam" id="NF003430">
    <property type="entry name" value="PRK04930.1"/>
    <property type="match status" value="1"/>
</dbReference>
<dbReference type="PANTHER" id="PTHR47307">
    <property type="entry name" value="GLUTATHIONE-REGULATED POTASSIUM-EFFLUX SYSTEM ANCILLARY PROTEIN KEFG"/>
    <property type="match status" value="1"/>
</dbReference>
<dbReference type="PANTHER" id="PTHR47307:SF1">
    <property type="entry name" value="GLUTATHIONE-REGULATED POTASSIUM-EFFLUX SYSTEM ANCILLARY PROTEIN KEFG"/>
    <property type="match status" value="1"/>
</dbReference>
<dbReference type="Pfam" id="PF02525">
    <property type="entry name" value="Flavodoxin_2"/>
    <property type="match status" value="1"/>
</dbReference>
<dbReference type="SUPFAM" id="SSF52218">
    <property type="entry name" value="Flavoproteins"/>
    <property type="match status" value="1"/>
</dbReference>
<reference key="1">
    <citation type="journal article" date="2009" name="PLoS Genet.">
        <title>Organised genome dynamics in the Escherichia coli species results in highly diverse adaptive paths.</title>
        <authorList>
            <person name="Touchon M."/>
            <person name="Hoede C."/>
            <person name="Tenaillon O."/>
            <person name="Barbe V."/>
            <person name="Baeriswyl S."/>
            <person name="Bidet P."/>
            <person name="Bingen E."/>
            <person name="Bonacorsi S."/>
            <person name="Bouchier C."/>
            <person name="Bouvet O."/>
            <person name="Calteau A."/>
            <person name="Chiapello H."/>
            <person name="Clermont O."/>
            <person name="Cruveiller S."/>
            <person name="Danchin A."/>
            <person name="Diard M."/>
            <person name="Dossat C."/>
            <person name="Karoui M.E."/>
            <person name="Frapy E."/>
            <person name="Garry L."/>
            <person name="Ghigo J.M."/>
            <person name="Gilles A.M."/>
            <person name="Johnson J."/>
            <person name="Le Bouguenec C."/>
            <person name="Lescat M."/>
            <person name="Mangenot S."/>
            <person name="Martinez-Jehanne V."/>
            <person name="Matic I."/>
            <person name="Nassif X."/>
            <person name="Oztas S."/>
            <person name="Petit M.A."/>
            <person name="Pichon C."/>
            <person name="Rouy Z."/>
            <person name="Ruf C.S."/>
            <person name="Schneider D."/>
            <person name="Tourret J."/>
            <person name="Vacherie B."/>
            <person name="Vallenet D."/>
            <person name="Medigue C."/>
            <person name="Rocha E.P.C."/>
            <person name="Denamur E."/>
        </authorList>
    </citation>
    <scope>NUCLEOTIDE SEQUENCE [LARGE SCALE GENOMIC DNA]</scope>
    <source>
        <strain>S88 / ExPEC</strain>
    </source>
</reference>
<proteinExistence type="inferred from homology"/>
<accession>B7MCW7</accession>
<protein>
    <recommendedName>
        <fullName evidence="1">Glutathione-regulated potassium-efflux system ancillary protein KefG</fullName>
    </recommendedName>
    <alternativeName>
        <fullName evidence="1">Putative quinone oxidoreductase KefG</fullName>
        <ecNumber evidence="1">1.6.5.2</ecNumber>
    </alternativeName>
</protein>
<gene>
    <name evidence="1" type="primary">kefG</name>
    <name type="ordered locus">ECS88_3740</name>
</gene>
<feature type="chain" id="PRO_1000145571" description="Glutathione-regulated potassium-efflux system ancillary protein KefG">
    <location>
        <begin position="1"/>
        <end position="184"/>
    </location>
</feature>
<evidence type="ECO:0000255" key="1">
    <source>
        <dbReference type="HAMAP-Rule" id="MF_01415"/>
    </source>
</evidence>
<sequence>MMSQPAKVLLLYAHPESQDSVANRVLLKPATQLSNVTVHDLYAHYPDFFIDIPREQALLREHEVIVFQHPLYTYSCPALLKEWLDRVLSRGFASGPGGNQLAGKYWRSVITTGEPESAYRYDALNRYPMSDVLRPFELAAGMCRMHWLSPIIIYWARRQSAQELASHARAYGDWLANPLSPGGC</sequence>